<keyword id="KW-1003">Cell membrane</keyword>
<keyword id="KW-0961">Cell wall biogenesis/degradation</keyword>
<keyword id="KW-0328">Glycosyltransferase</keyword>
<keyword id="KW-0472">Membrane</keyword>
<keyword id="KW-0808">Transferase</keyword>
<keyword id="KW-0812">Transmembrane</keyword>
<protein>
    <recommendedName>
        <fullName>Chitin synthase 3</fullName>
        <ecNumber>2.4.1.16</ecNumber>
    </recommendedName>
    <alternativeName>
        <fullName>Chitin-UDP acetyl-glucosaminyl transferase 3</fullName>
    </alternativeName>
    <alternativeName>
        <fullName>Class-II chitin synthase 3</fullName>
    </alternativeName>
</protein>
<proteinExistence type="inferred from homology"/>
<gene>
    <name type="primary">CHS3</name>
</gene>
<name>CHS3_AJECA</name>
<reference key="1">
    <citation type="journal article" date="1992" name="Proc. Natl. Acad. Sci. U.S.A.">
        <title>Classification of fungal chitin synthases.</title>
        <authorList>
            <person name="Bowen A.R."/>
            <person name="Chen-Wu J.L.-P."/>
            <person name="Momany M."/>
            <person name="Young R."/>
            <person name="Szaniszlo P.J."/>
            <person name="Robbins P.W."/>
        </authorList>
    </citation>
    <scope>NUCLEOTIDE SEQUENCE [GENOMIC DNA]</scope>
</reference>
<feature type="chain" id="PRO_0000193676" description="Chitin synthase 3">
    <location>
        <begin position="1" status="less than"/>
        <end position="189" status="greater than"/>
    </location>
</feature>
<feature type="non-terminal residue">
    <location>
        <position position="1"/>
    </location>
</feature>
<feature type="non-terminal residue">
    <location>
        <position position="189"/>
    </location>
</feature>
<dbReference type="EC" id="2.4.1.16"/>
<dbReference type="EMBL" id="M82949">
    <property type="protein sequence ID" value="AAA33382.1"/>
    <property type="molecule type" value="Genomic_DNA"/>
</dbReference>
<dbReference type="PIR" id="G45188">
    <property type="entry name" value="G45188"/>
</dbReference>
<dbReference type="SMR" id="P30578"/>
<dbReference type="CAZy" id="GT2">
    <property type="family name" value="Glycosyltransferase Family 2"/>
</dbReference>
<dbReference type="GO" id="GO:0030428">
    <property type="term" value="C:cell septum"/>
    <property type="evidence" value="ECO:0007669"/>
    <property type="project" value="TreeGrafter"/>
</dbReference>
<dbReference type="GO" id="GO:0005886">
    <property type="term" value="C:plasma membrane"/>
    <property type="evidence" value="ECO:0007669"/>
    <property type="project" value="UniProtKB-SubCell"/>
</dbReference>
<dbReference type="GO" id="GO:0004100">
    <property type="term" value="F:chitin synthase activity"/>
    <property type="evidence" value="ECO:0007669"/>
    <property type="project" value="UniProtKB-EC"/>
</dbReference>
<dbReference type="GO" id="GO:0071555">
    <property type="term" value="P:cell wall organization"/>
    <property type="evidence" value="ECO:0007669"/>
    <property type="project" value="UniProtKB-KW"/>
</dbReference>
<dbReference type="GO" id="GO:0006031">
    <property type="term" value="P:chitin biosynthetic process"/>
    <property type="evidence" value="ECO:0007669"/>
    <property type="project" value="InterPro"/>
</dbReference>
<dbReference type="InterPro" id="IPR004835">
    <property type="entry name" value="Chitin_synth"/>
</dbReference>
<dbReference type="InterPro" id="IPR004834">
    <property type="entry name" value="Chitin_synth_fun"/>
</dbReference>
<dbReference type="PANTHER" id="PTHR22914">
    <property type="entry name" value="CHITIN SYNTHASE"/>
    <property type="match status" value="1"/>
</dbReference>
<dbReference type="PANTHER" id="PTHR22914:SF38">
    <property type="entry name" value="CHITIN SYNTHASE 2"/>
    <property type="match status" value="1"/>
</dbReference>
<dbReference type="Pfam" id="PF01644">
    <property type="entry name" value="Chitin_synth_1"/>
    <property type="match status" value="1"/>
</dbReference>
<accession>P30578</accession>
<evidence type="ECO:0000305" key="1"/>
<comment type="function">
    <text evidence="1">Polymerizes chitin, a structural polymer of the cell wall and septum, by transferring the sugar moiety of UDP-GlcNAc to the non-reducing end of the growing chitin polymer.</text>
</comment>
<comment type="catalytic activity">
    <reaction>
        <text>[(1-&gt;4)-N-acetyl-beta-D-glucosaminyl](n) + UDP-N-acetyl-alpha-D-glucosamine = [(1-&gt;4)-N-acetyl-beta-D-glucosaminyl](n+1) + UDP + H(+)</text>
        <dbReference type="Rhea" id="RHEA:16637"/>
        <dbReference type="Rhea" id="RHEA-COMP:9593"/>
        <dbReference type="Rhea" id="RHEA-COMP:9595"/>
        <dbReference type="ChEBI" id="CHEBI:15378"/>
        <dbReference type="ChEBI" id="CHEBI:17029"/>
        <dbReference type="ChEBI" id="CHEBI:57705"/>
        <dbReference type="ChEBI" id="CHEBI:58223"/>
        <dbReference type="EC" id="2.4.1.16"/>
    </reaction>
</comment>
<comment type="subcellular location">
    <subcellularLocation>
        <location evidence="1">Cell membrane</location>
        <topology evidence="1">Multi-pass membrane protein</topology>
    </subcellularLocation>
</comment>
<comment type="similarity">
    <text evidence="1">Belongs to the chitin synthase family. Class II subfamily.</text>
</comment>
<organism>
    <name type="scientific">Ajellomyces capsulatus</name>
    <name type="common">Darling's disease fungus</name>
    <name type="synonym">Histoplasma capsulatum</name>
    <dbReference type="NCBI Taxonomy" id="5037"/>
    <lineage>
        <taxon>Eukaryota</taxon>
        <taxon>Fungi</taxon>
        <taxon>Dikarya</taxon>
        <taxon>Ascomycota</taxon>
        <taxon>Pezizomycotina</taxon>
        <taxon>Eurotiomycetes</taxon>
        <taxon>Eurotiomycetidae</taxon>
        <taxon>Onygenales</taxon>
        <taxon>Ajellomycetaceae</taxon>
        <taxon>Histoplasma</taxon>
    </lineage>
</organism>
<sequence>EIHFTRTTHGIMANITHFCSRTKSRTWGKDGWQKIVVCIIADGRQKVHPRTLNALAAMGVYQDGIAKNIVNQKPVNAHVYEYTTQVSLDPDLKFKGAEKGIMPCQIIFCLKERNEKKLNSHRWFFNAFGRALTPNVCILLDVGTKPGPTALYHLWKAFDQDSNVAGAAGEIKAGKGKGWLGLFNPLVAS</sequence>